<proteinExistence type="inferred from homology"/>
<dbReference type="EMBL" id="CP000946">
    <property type="protein sequence ID" value="ACA76090.1"/>
    <property type="molecule type" value="Genomic_DNA"/>
</dbReference>
<dbReference type="RefSeq" id="WP_001238914.1">
    <property type="nucleotide sequence ID" value="NZ_MTFT01000014.1"/>
</dbReference>
<dbReference type="SMR" id="B1IPZ8"/>
<dbReference type="KEGG" id="ecl:EcolC_0412"/>
<dbReference type="HOGENOM" id="CLU_055188_4_2_6"/>
<dbReference type="GO" id="GO:0022625">
    <property type="term" value="C:cytosolic large ribosomal subunit"/>
    <property type="evidence" value="ECO:0007669"/>
    <property type="project" value="TreeGrafter"/>
</dbReference>
<dbReference type="GO" id="GO:0019843">
    <property type="term" value="F:rRNA binding"/>
    <property type="evidence" value="ECO:0007669"/>
    <property type="project" value="UniProtKB-UniRule"/>
</dbReference>
<dbReference type="GO" id="GO:0003735">
    <property type="term" value="F:structural constituent of ribosome"/>
    <property type="evidence" value="ECO:0007669"/>
    <property type="project" value="InterPro"/>
</dbReference>
<dbReference type="GO" id="GO:0006412">
    <property type="term" value="P:translation"/>
    <property type="evidence" value="ECO:0007669"/>
    <property type="project" value="UniProtKB-UniRule"/>
</dbReference>
<dbReference type="FunFam" id="3.100.10.10:FF:000003">
    <property type="entry name" value="50S ribosomal protein L15"/>
    <property type="match status" value="1"/>
</dbReference>
<dbReference type="Gene3D" id="3.100.10.10">
    <property type="match status" value="1"/>
</dbReference>
<dbReference type="HAMAP" id="MF_01341">
    <property type="entry name" value="Ribosomal_uL15"/>
    <property type="match status" value="1"/>
</dbReference>
<dbReference type="InterPro" id="IPR030878">
    <property type="entry name" value="Ribosomal_uL15"/>
</dbReference>
<dbReference type="InterPro" id="IPR021131">
    <property type="entry name" value="Ribosomal_uL15/eL18"/>
</dbReference>
<dbReference type="InterPro" id="IPR036227">
    <property type="entry name" value="Ribosomal_uL15/eL18_sf"/>
</dbReference>
<dbReference type="InterPro" id="IPR005749">
    <property type="entry name" value="Ribosomal_uL15_bac-type"/>
</dbReference>
<dbReference type="InterPro" id="IPR001196">
    <property type="entry name" value="Ribosomal_uL15_CS"/>
</dbReference>
<dbReference type="NCBIfam" id="TIGR01071">
    <property type="entry name" value="rplO_bact"/>
    <property type="match status" value="1"/>
</dbReference>
<dbReference type="PANTHER" id="PTHR12934">
    <property type="entry name" value="50S RIBOSOMAL PROTEIN L15"/>
    <property type="match status" value="1"/>
</dbReference>
<dbReference type="PANTHER" id="PTHR12934:SF11">
    <property type="entry name" value="LARGE RIBOSOMAL SUBUNIT PROTEIN UL15M"/>
    <property type="match status" value="1"/>
</dbReference>
<dbReference type="Pfam" id="PF00828">
    <property type="entry name" value="Ribosomal_L27A"/>
    <property type="match status" value="1"/>
</dbReference>
<dbReference type="SUPFAM" id="SSF52080">
    <property type="entry name" value="Ribosomal proteins L15p and L18e"/>
    <property type="match status" value="1"/>
</dbReference>
<dbReference type="PROSITE" id="PS00475">
    <property type="entry name" value="RIBOSOMAL_L15"/>
    <property type="match status" value="1"/>
</dbReference>
<organism>
    <name type="scientific">Escherichia coli (strain ATCC 8739 / DSM 1576 / NBRC 3972 / NCIMB 8545 / WDCM 00012 / Crooks)</name>
    <dbReference type="NCBI Taxonomy" id="481805"/>
    <lineage>
        <taxon>Bacteria</taxon>
        <taxon>Pseudomonadati</taxon>
        <taxon>Pseudomonadota</taxon>
        <taxon>Gammaproteobacteria</taxon>
        <taxon>Enterobacterales</taxon>
        <taxon>Enterobacteriaceae</taxon>
        <taxon>Escherichia</taxon>
    </lineage>
</organism>
<evidence type="ECO:0000255" key="1">
    <source>
        <dbReference type="HAMAP-Rule" id="MF_01341"/>
    </source>
</evidence>
<evidence type="ECO:0000256" key="2">
    <source>
        <dbReference type="SAM" id="MobiDB-lite"/>
    </source>
</evidence>
<evidence type="ECO:0000305" key="3"/>
<comment type="function">
    <text evidence="1">Binds to the 23S rRNA.</text>
</comment>
<comment type="subunit">
    <text evidence="1">Part of the 50S ribosomal subunit.</text>
</comment>
<comment type="similarity">
    <text evidence="1">Belongs to the universal ribosomal protein uL15 family.</text>
</comment>
<keyword id="KW-0687">Ribonucleoprotein</keyword>
<keyword id="KW-0689">Ribosomal protein</keyword>
<keyword id="KW-0694">RNA-binding</keyword>
<keyword id="KW-0699">rRNA-binding</keyword>
<protein>
    <recommendedName>
        <fullName evidence="1">Large ribosomal subunit protein uL15</fullName>
    </recommendedName>
    <alternativeName>
        <fullName evidence="3">50S ribosomal protein L15</fullName>
    </alternativeName>
</protein>
<name>RL15_ECOLC</name>
<reference key="1">
    <citation type="submission" date="2008-02" db="EMBL/GenBank/DDBJ databases">
        <title>Complete sequence of Escherichia coli C str. ATCC 8739.</title>
        <authorList>
            <person name="Copeland A."/>
            <person name="Lucas S."/>
            <person name="Lapidus A."/>
            <person name="Glavina del Rio T."/>
            <person name="Dalin E."/>
            <person name="Tice H."/>
            <person name="Bruce D."/>
            <person name="Goodwin L."/>
            <person name="Pitluck S."/>
            <person name="Kiss H."/>
            <person name="Brettin T."/>
            <person name="Detter J.C."/>
            <person name="Han C."/>
            <person name="Kuske C.R."/>
            <person name="Schmutz J."/>
            <person name="Larimer F."/>
            <person name="Land M."/>
            <person name="Hauser L."/>
            <person name="Kyrpides N."/>
            <person name="Mikhailova N."/>
            <person name="Ingram L."/>
            <person name="Richardson P."/>
        </authorList>
    </citation>
    <scope>NUCLEOTIDE SEQUENCE [LARGE SCALE GENOMIC DNA]</scope>
    <source>
        <strain>ATCC 8739 / DSM 1576 / NBRC 3972 / NCIMB 8545 / WDCM 00012 / Crooks</strain>
    </source>
</reference>
<gene>
    <name evidence="1" type="primary">rplO</name>
    <name type="ordered locus">EcolC_0412</name>
</gene>
<sequence length="144" mass="14980">MRLNTLSPAEGSKKAGKRLGRGIGSGLGKTGGRGHKGQKSRSGGGVRRGFEGGQMPLYRRLPKFGFTSRKAAITAEIRLSDLAKVEGGVVDLNTLKAANIIGIQIEFAKVILAGEVTTPVTVRGLRVTKGARAAIEAAGGKIEE</sequence>
<accession>B1IPZ8</accession>
<feature type="chain" id="PRO_1000086712" description="Large ribosomal subunit protein uL15">
    <location>
        <begin position="1"/>
        <end position="144"/>
    </location>
</feature>
<feature type="region of interest" description="Disordered" evidence="2">
    <location>
        <begin position="1"/>
        <end position="54"/>
    </location>
</feature>
<feature type="compositionally biased region" description="Gly residues" evidence="2">
    <location>
        <begin position="21"/>
        <end position="31"/>
    </location>
</feature>